<keyword id="KW-1185">Reference proteome</keyword>
<keyword id="KW-0687">Ribonucleoprotein</keyword>
<keyword id="KW-0689">Ribosomal protein</keyword>
<keyword id="KW-0694">RNA-binding</keyword>
<keyword id="KW-0699">rRNA-binding</keyword>
<protein>
    <recommendedName>
        <fullName evidence="1">Large ribosomal subunit protein bL9</fullName>
    </recommendedName>
    <alternativeName>
        <fullName evidence="2">50S ribosomal protein L9</fullName>
    </alternativeName>
</protein>
<dbReference type="EMBL" id="AE014133">
    <property type="protein sequence ID" value="AAN59730.1"/>
    <property type="molecule type" value="Genomic_DNA"/>
</dbReference>
<dbReference type="RefSeq" id="NP_722424.1">
    <property type="nucleotide sequence ID" value="NC_004350.2"/>
</dbReference>
<dbReference type="RefSeq" id="WP_002262441.1">
    <property type="nucleotide sequence ID" value="NC_004350.2"/>
</dbReference>
<dbReference type="SMR" id="Q8DRS8"/>
<dbReference type="STRING" id="210007.SMU_2139c"/>
<dbReference type="GeneID" id="93860346"/>
<dbReference type="KEGG" id="smu:SMU_2139c"/>
<dbReference type="PATRIC" id="fig|210007.7.peg.1903"/>
<dbReference type="eggNOG" id="COG0359">
    <property type="taxonomic scope" value="Bacteria"/>
</dbReference>
<dbReference type="HOGENOM" id="CLU_078938_3_2_9"/>
<dbReference type="OrthoDB" id="9788336at2"/>
<dbReference type="PhylomeDB" id="Q8DRS8"/>
<dbReference type="Proteomes" id="UP000002512">
    <property type="component" value="Chromosome"/>
</dbReference>
<dbReference type="GO" id="GO:1990904">
    <property type="term" value="C:ribonucleoprotein complex"/>
    <property type="evidence" value="ECO:0007669"/>
    <property type="project" value="UniProtKB-KW"/>
</dbReference>
<dbReference type="GO" id="GO:0005840">
    <property type="term" value="C:ribosome"/>
    <property type="evidence" value="ECO:0007669"/>
    <property type="project" value="UniProtKB-KW"/>
</dbReference>
<dbReference type="GO" id="GO:0019843">
    <property type="term" value="F:rRNA binding"/>
    <property type="evidence" value="ECO:0007669"/>
    <property type="project" value="UniProtKB-UniRule"/>
</dbReference>
<dbReference type="GO" id="GO:0003735">
    <property type="term" value="F:structural constituent of ribosome"/>
    <property type="evidence" value="ECO:0007669"/>
    <property type="project" value="InterPro"/>
</dbReference>
<dbReference type="GO" id="GO:0006412">
    <property type="term" value="P:translation"/>
    <property type="evidence" value="ECO:0007669"/>
    <property type="project" value="UniProtKB-UniRule"/>
</dbReference>
<dbReference type="FunFam" id="3.40.5.10:FF:000002">
    <property type="entry name" value="50S ribosomal protein L9"/>
    <property type="match status" value="1"/>
</dbReference>
<dbReference type="Gene3D" id="3.10.430.100">
    <property type="entry name" value="Ribosomal protein L9, C-terminal domain"/>
    <property type="match status" value="1"/>
</dbReference>
<dbReference type="Gene3D" id="3.40.5.10">
    <property type="entry name" value="Ribosomal protein L9, N-terminal domain"/>
    <property type="match status" value="1"/>
</dbReference>
<dbReference type="HAMAP" id="MF_00503">
    <property type="entry name" value="Ribosomal_bL9"/>
    <property type="match status" value="1"/>
</dbReference>
<dbReference type="InterPro" id="IPR000244">
    <property type="entry name" value="Ribosomal_bL9"/>
</dbReference>
<dbReference type="InterPro" id="IPR009027">
    <property type="entry name" value="Ribosomal_bL9/RNase_H1_N"/>
</dbReference>
<dbReference type="InterPro" id="IPR020594">
    <property type="entry name" value="Ribosomal_bL9_bac/chp"/>
</dbReference>
<dbReference type="InterPro" id="IPR020069">
    <property type="entry name" value="Ribosomal_bL9_C"/>
</dbReference>
<dbReference type="InterPro" id="IPR036791">
    <property type="entry name" value="Ribosomal_bL9_C_sf"/>
</dbReference>
<dbReference type="InterPro" id="IPR020070">
    <property type="entry name" value="Ribosomal_bL9_N"/>
</dbReference>
<dbReference type="InterPro" id="IPR036935">
    <property type="entry name" value="Ribosomal_bL9_N_sf"/>
</dbReference>
<dbReference type="NCBIfam" id="TIGR00158">
    <property type="entry name" value="L9"/>
    <property type="match status" value="1"/>
</dbReference>
<dbReference type="PANTHER" id="PTHR21368">
    <property type="entry name" value="50S RIBOSOMAL PROTEIN L9"/>
    <property type="match status" value="1"/>
</dbReference>
<dbReference type="Pfam" id="PF03948">
    <property type="entry name" value="Ribosomal_L9_C"/>
    <property type="match status" value="1"/>
</dbReference>
<dbReference type="Pfam" id="PF01281">
    <property type="entry name" value="Ribosomal_L9_N"/>
    <property type="match status" value="1"/>
</dbReference>
<dbReference type="SUPFAM" id="SSF55658">
    <property type="entry name" value="L9 N-domain-like"/>
    <property type="match status" value="1"/>
</dbReference>
<dbReference type="SUPFAM" id="SSF55653">
    <property type="entry name" value="Ribosomal protein L9 C-domain"/>
    <property type="match status" value="1"/>
</dbReference>
<dbReference type="PROSITE" id="PS00651">
    <property type="entry name" value="RIBOSOMAL_L9"/>
    <property type="match status" value="1"/>
</dbReference>
<sequence length="150" mass="16771">MKVIFLADVKGKGKRGEVKEVSTGYAQNFLIKKNLAKEATKQAINELKGKQKSEEKAQAELLAEAKAVKVKLEQESTLVQFSEKVGPDGRTFGSITSKKISEELNKQFGIKLDKRYIKLDHPIRTIGLIEIPVKLHKDIDGIIKLQIKEA</sequence>
<comment type="function">
    <text evidence="1">Binds to the 23S rRNA.</text>
</comment>
<comment type="similarity">
    <text evidence="1">Belongs to the bacterial ribosomal protein bL9 family.</text>
</comment>
<name>RL9_STRMU</name>
<gene>
    <name evidence="1" type="primary">rplI</name>
    <name type="ordered locus">SMU_2139c</name>
</gene>
<evidence type="ECO:0000255" key="1">
    <source>
        <dbReference type="HAMAP-Rule" id="MF_00503"/>
    </source>
</evidence>
<evidence type="ECO:0000305" key="2"/>
<organism>
    <name type="scientific">Streptococcus mutans serotype c (strain ATCC 700610 / UA159)</name>
    <dbReference type="NCBI Taxonomy" id="210007"/>
    <lineage>
        <taxon>Bacteria</taxon>
        <taxon>Bacillati</taxon>
        <taxon>Bacillota</taxon>
        <taxon>Bacilli</taxon>
        <taxon>Lactobacillales</taxon>
        <taxon>Streptococcaceae</taxon>
        <taxon>Streptococcus</taxon>
    </lineage>
</organism>
<proteinExistence type="inferred from homology"/>
<accession>Q8DRS8</accession>
<reference key="1">
    <citation type="journal article" date="2002" name="Proc. Natl. Acad. Sci. U.S.A.">
        <title>Genome sequence of Streptococcus mutans UA159, a cariogenic dental pathogen.</title>
        <authorList>
            <person name="Ajdic D.J."/>
            <person name="McShan W.M."/>
            <person name="McLaughlin R.E."/>
            <person name="Savic G."/>
            <person name="Chang J."/>
            <person name="Carson M.B."/>
            <person name="Primeaux C."/>
            <person name="Tian R."/>
            <person name="Kenton S."/>
            <person name="Jia H.G."/>
            <person name="Lin S.P."/>
            <person name="Qian Y."/>
            <person name="Li S."/>
            <person name="Zhu H."/>
            <person name="Najar F.Z."/>
            <person name="Lai H."/>
            <person name="White J."/>
            <person name="Roe B.A."/>
            <person name="Ferretti J.J."/>
        </authorList>
    </citation>
    <scope>NUCLEOTIDE SEQUENCE [LARGE SCALE GENOMIC DNA]</scope>
    <source>
        <strain>ATCC 700610 / UA159</strain>
    </source>
</reference>
<feature type="chain" id="PRO_0000236595" description="Large ribosomal subunit protein bL9">
    <location>
        <begin position="1"/>
        <end position="150"/>
    </location>
</feature>